<comment type="function">
    <text evidence="1">Catalyzes the isomerization of 5-dehydro-4-deoxy-D-glucuronate to 3-deoxy-D-glycero-2,5-hexodiulosonate.</text>
</comment>
<comment type="catalytic activity">
    <reaction evidence="1">
        <text>5-dehydro-4-deoxy-D-glucuronate = 3-deoxy-D-glycero-2,5-hexodiulosonate</text>
        <dbReference type="Rhea" id="RHEA:23896"/>
        <dbReference type="ChEBI" id="CHEBI:17117"/>
        <dbReference type="ChEBI" id="CHEBI:29071"/>
        <dbReference type="EC" id="5.3.1.17"/>
    </reaction>
</comment>
<comment type="cofactor">
    <cofactor evidence="1">
        <name>Zn(2+)</name>
        <dbReference type="ChEBI" id="CHEBI:29105"/>
    </cofactor>
    <text evidence="1">Binds 1 zinc ion per subunit.</text>
</comment>
<comment type="pathway">
    <text evidence="1">Glycan metabolism; pectin degradation; 2-dehydro-3-deoxy-D-gluconate from pectin: step 4/5.</text>
</comment>
<comment type="similarity">
    <text evidence="1">Belongs to the KduI family.</text>
</comment>
<accession>Q8PR01</accession>
<reference key="1">
    <citation type="journal article" date="2002" name="Nature">
        <title>Comparison of the genomes of two Xanthomonas pathogens with differing host specificities.</title>
        <authorList>
            <person name="da Silva A.C.R."/>
            <person name="Ferro J.A."/>
            <person name="Reinach F.C."/>
            <person name="Farah C.S."/>
            <person name="Furlan L.R."/>
            <person name="Quaggio R.B."/>
            <person name="Monteiro-Vitorello C.B."/>
            <person name="Van Sluys M.A."/>
            <person name="Almeida N.F. Jr."/>
            <person name="Alves L.M.C."/>
            <person name="do Amaral A.M."/>
            <person name="Bertolini M.C."/>
            <person name="Camargo L.E.A."/>
            <person name="Camarotte G."/>
            <person name="Cannavan F."/>
            <person name="Cardozo J."/>
            <person name="Chambergo F."/>
            <person name="Ciapina L.P."/>
            <person name="Cicarelli R.M.B."/>
            <person name="Coutinho L.L."/>
            <person name="Cursino-Santos J.R."/>
            <person name="El-Dorry H."/>
            <person name="Faria J.B."/>
            <person name="Ferreira A.J.S."/>
            <person name="Ferreira R.C.C."/>
            <person name="Ferro M.I.T."/>
            <person name="Formighieri E.F."/>
            <person name="Franco M.C."/>
            <person name="Greggio C.C."/>
            <person name="Gruber A."/>
            <person name="Katsuyama A.M."/>
            <person name="Kishi L.T."/>
            <person name="Leite R.P."/>
            <person name="Lemos E.G.M."/>
            <person name="Lemos M.V.F."/>
            <person name="Locali E.C."/>
            <person name="Machado M.A."/>
            <person name="Madeira A.M.B.N."/>
            <person name="Martinez-Rossi N.M."/>
            <person name="Martins E.C."/>
            <person name="Meidanis J."/>
            <person name="Menck C.F.M."/>
            <person name="Miyaki C.Y."/>
            <person name="Moon D.H."/>
            <person name="Moreira L.M."/>
            <person name="Novo M.T.M."/>
            <person name="Okura V.K."/>
            <person name="Oliveira M.C."/>
            <person name="Oliveira V.R."/>
            <person name="Pereira H.A."/>
            <person name="Rossi A."/>
            <person name="Sena J.A.D."/>
            <person name="Silva C."/>
            <person name="de Souza R.F."/>
            <person name="Spinola L.A.F."/>
            <person name="Takita M.A."/>
            <person name="Tamura R.E."/>
            <person name="Teixeira E.C."/>
            <person name="Tezza R.I.D."/>
            <person name="Trindade dos Santos M."/>
            <person name="Truffi D."/>
            <person name="Tsai S.M."/>
            <person name="White F.F."/>
            <person name="Setubal J.C."/>
            <person name="Kitajima J.P."/>
        </authorList>
    </citation>
    <scope>NUCLEOTIDE SEQUENCE [LARGE SCALE GENOMIC DNA]</scope>
    <source>
        <strain>306</strain>
    </source>
</reference>
<evidence type="ECO:0000255" key="1">
    <source>
        <dbReference type="HAMAP-Rule" id="MF_00687"/>
    </source>
</evidence>
<feature type="chain" id="PRO_0000215498" description="4-deoxy-L-threo-5-hexosulose-uronate ketol-isomerase">
    <location>
        <begin position="1"/>
        <end position="284"/>
    </location>
</feature>
<feature type="binding site" evidence="1">
    <location>
        <position position="202"/>
    </location>
    <ligand>
        <name>Zn(2+)</name>
        <dbReference type="ChEBI" id="CHEBI:29105"/>
    </ligand>
</feature>
<feature type="binding site" evidence="1">
    <location>
        <position position="204"/>
    </location>
    <ligand>
        <name>Zn(2+)</name>
        <dbReference type="ChEBI" id="CHEBI:29105"/>
    </ligand>
</feature>
<feature type="binding site" evidence="1">
    <location>
        <position position="209"/>
    </location>
    <ligand>
        <name>Zn(2+)</name>
        <dbReference type="ChEBI" id="CHEBI:29105"/>
    </ligand>
</feature>
<feature type="binding site" evidence="1">
    <location>
        <position position="251"/>
    </location>
    <ligand>
        <name>Zn(2+)</name>
        <dbReference type="ChEBI" id="CHEBI:29105"/>
    </ligand>
</feature>
<sequence>MSLYCKTHYATHPDAIKGASNDDLRELYLLDGLFVDDAVTLKYTHYERFVLGGAAPLGRTLELPRQTEPASAAGHPFLERRELGILNVGAGTGTVIVDGTAYTLGPKDGLYVAMGSTDVSFASEDAGNPAKFYLASTPAHARFETKQLSIKDAVALERGALETSNERTIYQYIVPATCQSSQLLLGLTVLKPGSVWNTMPPHLHDRRSEVYFYFDLGADDRVYHFMGEPDAQRHIVIQNNEAVVSPPWSIHMGAGTSNYAFIWAMGGENLDYTDMHVLDICQLK</sequence>
<dbReference type="EC" id="5.3.1.17" evidence="1"/>
<dbReference type="EMBL" id="AE008923">
    <property type="protein sequence ID" value="AAM35060.1"/>
    <property type="molecule type" value="Genomic_DNA"/>
</dbReference>
<dbReference type="RefSeq" id="WP_011050141.1">
    <property type="nucleotide sequence ID" value="NC_003919.1"/>
</dbReference>
<dbReference type="SMR" id="Q8PR01"/>
<dbReference type="GeneID" id="66909378"/>
<dbReference type="KEGG" id="xac:XAC0168"/>
<dbReference type="eggNOG" id="COG3717">
    <property type="taxonomic scope" value="Bacteria"/>
</dbReference>
<dbReference type="HOGENOM" id="CLU_062609_0_0_6"/>
<dbReference type="UniPathway" id="UPA00545">
    <property type="reaction ID" value="UER00826"/>
</dbReference>
<dbReference type="Proteomes" id="UP000000576">
    <property type="component" value="Chromosome"/>
</dbReference>
<dbReference type="GO" id="GO:0008697">
    <property type="term" value="F:4-deoxy-L-threo-5-hexosulose-uronate ketol-isomerase activity"/>
    <property type="evidence" value="ECO:0007669"/>
    <property type="project" value="UniProtKB-UniRule"/>
</dbReference>
<dbReference type="GO" id="GO:0008270">
    <property type="term" value="F:zinc ion binding"/>
    <property type="evidence" value="ECO:0007669"/>
    <property type="project" value="UniProtKB-UniRule"/>
</dbReference>
<dbReference type="GO" id="GO:0019698">
    <property type="term" value="P:D-galacturonate catabolic process"/>
    <property type="evidence" value="ECO:0007669"/>
    <property type="project" value="TreeGrafter"/>
</dbReference>
<dbReference type="GO" id="GO:0042840">
    <property type="term" value="P:D-glucuronate catabolic process"/>
    <property type="evidence" value="ECO:0007669"/>
    <property type="project" value="TreeGrafter"/>
</dbReference>
<dbReference type="GO" id="GO:0045490">
    <property type="term" value="P:pectin catabolic process"/>
    <property type="evidence" value="ECO:0007669"/>
    <property type="project" value="UniProtKB-UniRule"/>
</dbReference>
<dbReference type="CDD" id="cd20491">
    <property type="entry name" value="cupin_KduI_C"/>
    <property type="match status" value="1"/>
</dbReference>
<dbReference type="CDD" id="cd20294">
    <property type="entry name" value="cupin_KduI_N"/>
    <property type="match status" value="1"/>
</dbReference>
<dbReference type="Gene3D" id="2.60.120.10">
    <property type="entry name" value="Jelly Rolls"/>
    <property type="match status" value="1"/>
</dbReference>
<dbReference type="Gene3D" id="2.60.120.520">
    <property type="entry name" value="pectin degrading enzyme 5-keto 4- deoxyuronate isomerase, domain 1"/>
    <property type="match status" value="1"/>
</dbReference>
<dbReference type="HAMAP" id="MF_00687">
    <property type="entry name" value="KduI"/>
    <property type="match status" value="1"/>
</dbReference>
<dbReference type="InterPro" id="IPR007045">
    <property type="entry name" value="KduI"/>
</dbReference>
<dbReference type="InterPro" id="IPR021120">
    <property type="entry name" value="KduI/IolB_isomerase"/>
</dbReference>
<dbReference type="InterPro" id="IPR027449">
    <property type="entry name" value="KduI_N"/>
</dbReference>
<dbReference type="InterPro" id="IPR014710">
    <property type="entry name" value="RmlC-like_jellyroll"/>
</dbReference>
<dbReference type="InterPro" id="IPR011051">
    <property type="entry name" value="RmlC_Cupin_sf"/>
</dbReference>
<dbReference type="NCBIfam" id="NF002091">
    <property type="entry name" value="PRK00924.1"/>
    <property type="match status" value="1"/>
</dbReference>
<dbReference type="PANTHER" id="PTHR38461">
    <property type="entry name" value="4-DEOXY-L-THREO-5-HEXOSULOSE-URONATE KETOL-ISOMERASE"/>
    <property type="match status" value="1"/>
</dbReference>
<dbReference type="PANTHER" id="PTHR38461:SF1">
    <property type="entry name" value="4-DEOXY-L-THREO-5-HEXOSULOSE-URONATE KETOL-ISOMERASE"/>
    <property type="match status" value="1"/>
</dbReference>
<dbReference type="Pfam" id="PF04962">
    <property type="entry name" value="KduI"/>
    <property type="match status" value="1"/>
</dbReference>
<dbReference type="PIRSF" id="PIRSF006625">
    <property type="entry name" value="KduI"/>
    <property type="match status" value="1"/>
</dbReference>
<dbReference type="SUPFAM" id="SSF51182">
    <property type="entry name" value="RmlC-like cupins"/>
    <property type="match status" value="1"/>
</dbReference>
<gene>
    <name evidence="1" type="primary">kduI</name>
    <name type="ordered locus">XAC0168</name>
</gene>
<name>KDUI_XANAC</name>
<proteinExistence type="inferred from homology"/>
<organism>
    <name type="scientific">Xanthomonas axonopodis pv. citri (strain 306)</name>
    <dbReference type="NCBI Taxonomy" id="190486"/>
    <lineage>
        <taxon>Bacteria</taxon>
        <taxon>Pseudomonadati</taxon>
        <taxon>Pseudomonadota</taxon>
        <taxon>Gammaproteobacteria</taxon>
        <taxon>Lysobacterales</taxon>
        <taxon>Lysobacteraceae</taxon>
        <taxon>Xanthomonas</taxon>
    </lineage>
</organism>
<keyword id="KW-0413">Isomerase</keyword>
<keyword id="KW-0479">Metal-binding</keyword>
<keyword id="KW-0862">Zinc</keyword>
<protein>
    <recommendedName>
        <fullName evidence="1">4-deoxy-L-threo-5-hexosulose-uronate ketol-isomerase</fullName>
        <ecNumber evidence="1">5.3.1.17</ecNumber>
    </recommendedName>
    <alternativeName>
        <fullName evidence="1">5-keto-4-deoxyuronate isomerase</fullName>
    </alternativeName>
    <alternativeName>
        <fullName evidence="1">DKI isomerase</fullName>
    </alternativeName>
</protein>